<evidence type="ECO:0000250" key="1">
    <source>
        <dbReference type="UniProtKB" id="Q8ZPZ9"/>
    </source>
</evidence>
<evidence type="ECO:0000255" key="2"/>
<evidence type="ECO:0000269" key="3">
    <source>
    </source>
</evidence>
<evidence type="ECO:0000303" key="4">
    <source>
    </source>
</evidence>
<evidence type="ECO:0000305" key="5"/>
<evidence type="ECO:0000305" key="6">
    <source>
    </source>
</evidence>
<name>AGAK_SHESA</name>
<dbReference type="EC" id="2.7.1.-" evidence="3"/>
<dbReference type="EC" id="2.7.1.59" evidence="3"/>
<dbReference type="EMBL" id="CP000469">
    <property type="protein sequence ID" value="ABK48925.1"/>
    <property type="molecule type" value="Genomic_DNA"/>
</dbReference>
<dbReference type="RefSeq" id="WP_011717582.1">
    <property type="nucleotide sequence ID" value="NC_008577.1"/>
</dbReference>
<dbReference type="SMR" id="A0KYQ6"/>
<dbReference type="STRING" id="94122.Shewana3_2698"/>
<dbReference type="KEGG" id="shn:Shewana3_2698"/>
<dbReference type="eggNOG" id="COG1940">
    <property type="taxonomic scope" value="Bacteria"/>
</dbReference>
<dbReference type="HOGENOM" id="CLU_036604_0_3_6"/>
<dbReference type="OrthoDB" id="9810372at2"/>
<dbReference type="BioCyc" id="MetaCyc:MONOMER-17510"/>
<dbReference type="SABIO-RK" id="A0KYQ6"/>
<dbReference type="Proteomes" id="UP000002589">
    <property type="component" value="Chromosome"/>
</dbReference>
<dbReference type="GO" id="GO:0005737">
    <property type="term" value="C:cytoplasm"/>
    <property type="evidence" value="ECO:0007669"/>
    <property type="project" value="UniProtKB-SubCell"/>
</dbReference>
<dbReference type="GO" id="GO:0005524">
    <property type="term" value="F:ATP binding"/>
    <property type="evidence" value="ECO:0007669"/>
    <property type="project" value="UniProtKB-KW"/>
</dbReference>
<dbReference type="GO" id="GO:0046872">
    <property type="term" value="F:metal ion binding"/>
    <property type="evidence" value="ECO:0007669"/>
    <property type="project" value="UniProtKB-KW"/>
</dbReference>
<dbReference type="GO" id="GO:0045127">
    <property type="term" value="F:N-acetylglucosamine kinase activity"/>
    <property type="evidence" value="ECO:0000314"/>
    <property type="project" value="UniProtKB"/>
</dbReference>
<dbReference type="GO" id="GO:0006044">
    <property type="term" value="P:N-acetylglucosamine metabolic process"/>
    <property type="evidence" value="ECO:0000314"/>
    <property type="project" value="UniProtKB"/>
</dbReference>
<dbReference type="CDD" id="cd24057">
    <property type="entry name" value="ASKHA_NBD_ROK_NAGK"/>
    <property type="match status" value="1"/>
</dbReference>
<dbReference type="Gene3D" id="3.30.420.40">
    <property type="match status" value="2"/>
</dbReference>
<dbReference type="InterPro" id="IPR043129">
    <property type="entry name" value="ATPase_NBD"/>
</dbReference>
<dbReference type="InterPro" id="IPR000600">
    <property type="entry name" value="ROK"/>
</dbReference>
<dbReference type="InterPro" id="IPR049874">
    <property type="entry name" value="ROK_cs"/>
</dbReference>
<dbReference type="PANTHER" id="PTHR18964:SF162">
    <property type="entry name" value="N-ACETYL-D-GLUCOSAMINE KINASE"/>
    <property type="match status" value="1"/>
</dbReference>
<dbReference type="PANTHER" id="PTHR18964">
    <property type="entry name" value="ROK (REPRESSOR, ORF, KINASE) FAMILY"/>
    <property type="match status" value="1"/>
</dbReference>
<dbReference type="Pfam" id="PF00480">
    <property type="entry name" value="ROK"/>
    <property type="match status" value="1"/>
</dbReference>
<dbReference type="SUPFAM" id="SSF53067">
    <property type="entry name" value="Actin-like ATPase domain"/>
    <property type="match status" value="1"/>
</dbReference>
<dbReference type="PROSITE" id="PS01125">
    <property type="entry name" value="ROK"/>
    <property type="match status" value="1"/>
</dbReference>
<comment type="function">
    <text evidence="3">Involved in the pathway of N-acetyl-D-galactosamine degradation. Catalyzes the phosphorylation of N-acetyl-D-galactosamine (GalNAc) to yield D-galactosamine 6-phosphate (GalN-6-P). It can also phosphorylate N-acetylglucosamine (GlcNAc).</text>
</comment>
<comment type="catalytic activity">
    <reaction evidence="3">
        <text>N-acetyl-D-galactosamine + ATP = N-acetyl-D-galactosamine 6-phosphate + ADP + H(+)</text>
        <dbReference type="Rhea" id="RHEA:47676"/>
        <dbReference type="ChEBI" id="CHEBI:15378"/>
        <dbReference type="ChEBI" id="CHEBI:28037"/>
        <dbReference type="ChEBI" id="CHEBI:30616"/>
        <dbReference type="ChEBI" id="CHEBI:71673"/>
        <dbReference type="ChEBI" id="CHEBI:456216"/>
    </reaction>
</comment>
<comment type="catalytic activity">
    <reaction evidence="3">
        <text>N-acetyl-D-glucosamine + ATP = N-acetyl-D-glucosamine 6-phosphate + ADP + H(+)</text>
        <dbReference type="Rhea" id="RHEA:17417"/>
        <dbReference type="ChEBI" id="CHEBI:15378"/>
        <dbReference type="ChEBI" id="CHEBI:30616"/>
        <dbReference type="ChEBI" id="CHEBI:57513"/>
        <dbReference type="ChEBI" id="CHEBI:456216"/>
        <dbReference type="ChEBI" id="CHEBI:506227"/>
        <dbReference type="EC" id="2.7.1.59"/>
    </reaction>
</comment>
<comment type="biophysicochemical properties">
    <kinetics>
        <KM evidence="3">0.98 mM for GalNAc</KM>
        <KM evidence="3">37.2 mM for GlcNAc</KM>
        <text evidence="3">kcat is 40.3 sec(-1) for kinase activity with GalNAc as substrate. kcat is 7.1 sec(-1) for kinase activity with GlcNAc as substrate.</text>
    </kinetics>
</comment>
<comment type="subcellular location">
    <subcellularLocation>
        <location evidence="6">Cytoplasm</location>
    </subcellularLocation>
</comment>
<comment type="miscellaneous">
    <text evidence="6">In Shewanella sp., the active phosphotransferase system (PTS) specific for the transport of GalNAc and GalN is replaced by a set of GalNAc- and GalN-specific permeases and kinases (AgaP and AgaK, respectively).</text>
</comment>
<comment type="similarity">
    <text evidence="5">Belongs to the ROK (NagC/XylR) family.</text>
</comment>
<feature type="chain" id="PRO_5000165395" description="N-acetylgalactosamine kinase AgaK">
    <location>
        <begin position="1"/>
        <end position="308"/>
    </location>
</feature>
<feature type="binding site" evidence="2">
    <location>
        <begin position="4"/>
        <end position="11"/>
    </location>
    <ligand>
        <name>ATP</name>
        <dbReference type="ChEBI" id="CHEBI:30616"/>
    </ligand>
</feature>
<feature type="binding site" evidence="2">
    <location>
        <begin position="132"/>
        <end position="139"/>
    </location>
    <ligand>
        <name>ATP</name>
        <dbReference type="ChEBI" id="CHEBI:30616"/>
    </ligand>
</feature>
<feature type="binding site" evidence="1">
    <location>
        <position position="156"/>
    </location>
    <ligand>
        <name>Zn(2+)</name>
        <dbReference type="ChEBI" id="CHEBI:29105"/>
    </ligand>
</feature>
<feature type="binding site" evidence="1">
    <location>
        <position position="174"/>
    </location>
    <ligand>
        <name>Zn(2+)</name>
        <dbReference type="ChEBI" id="CHEBI:29105"/>
    </ligand>
</feature>
<feature type="binding site" evidence="1">
    <location>
        <position position="176"/>
    </location>
    <ligand>
        <name>Zn(2+)</name>
        <dbReference type="ChEBI" id="CHEBI:29105"/>
    </ligand>
</feature>
<feature type="binding site" evidence="1">
    <location>
        <position position="181"/>
    </location>
    <ligand>
        <name>Zn(2+)</name>
        <dbReference type="ChEBI" id="CHEBI:29105"/>
    </ligand>
</feature>
<keyword id="KW-0067">ATP-binding</keyword>
<keyword id="KW-0119">Carbohydrate metabolism</keyword>
<keyword id="KW-0963">Cytoplasm</keyword>
<keyword id="KW-0418">Kinase</keyword>
<keyword id="KW-0479">Metal-binding</keyword>
<keyword id="KW-0547">Nucleotide-binding</keyword>
<keyword id="KW-0808">Transferase</keyword>
<keyword id="KW-0862">Zinc</keyword>
<accession>A0KYQ6</accession>
<proteinExistence type="evidence at protein level"/>
<protein>
    <recommendedName>
        <fullName evidence="4">N-acetylgalactosamine kinase AgaK</fullName>
        <shortName evidence="4">GalNAc kinase</shortName>
        <ecNumber evidence="3">2.7.1.-</ecNumber>
    </recommendedName>
    <alternativeName>
        <fullName evidence="4">N-acetylglucosamine kinase</fullName>
        <shortName evidence="6">GlcNAc kinase</shortName>
        <ecNumber evidence="3">2.7.1.59</ecNumber>
    </alternativeName>
</protein>
<sequence length="308" mass="32282">MYYGLDIGGTKIELAIFDTQLALQDKWRLSTPGQDYSAFMATLAEQIEKADQQCGERGTVGIALPGVVKADGTVISSNVPCLNQRRVAHDLAQLLNRTVAIGNDCRCFALSEAVLGVGRGYSRVLGMILGTGTGGGLCIDGKLYLGANRLAGEFGHQGVSANVACRHQLPLYVCGCGLEGCAETYVSGTGLGRLYQDIAGQTADTFAWLNALRCNDPLAIKTFDTYMDILGSLMASLVLAMDPDIIVLGGGLSEVEEILAALPQATKAHLFDGVTLPQFKLADFGSASGVRGAALLGHGLDAGISYEA</sequence>
<organism>
    <name type="scientific">Shewanella sp. (strain ANA-3)</name>
    <dbReference type="NCBI Taxonomy" id="94122"/>
    <lineage>
        <taxon>Bacteria</taxon>
        <taxon>Pseudomonadati</taxon>
        <taxon>Pseudomonadota</taxon>
        <taxon>Gammaproteobacteria</taxon>
        <taxon>Alteromonadales</taxon>
        <taxon>Shewanellaceae</taxon>
        <taxon>Shewanella</taxon>
    </lineage>
</organism>
<gene>
    <name evidence="4" type="primary">agaK</name>
    <name type="ordered locus">Shewana3_2698</name>
</gene>
<reference key="1">
    <citation type="submission" date="2006-09" db="EMBL/GenBank/DDBJ databases">
        <title>Complete sequence of chromosome 1 of Shewanella sp. ANA-3.</title>
        <authorList>
            <person name="Copeland A."/>
            <person name="Lucas S."/>
            <person name="Lapidus A."/>
            <person name="Barry K."/>
            <person name="Detter J.C."/>
            <person name="Glavina del Rio T."/>
            <person name="Hammon N."/>
            <person name="Israni S."/>
            <person name="Dalin E."/>
            <person name="Tice H."/>
            <person name="Pitluck S."/>
            <person name="Chertkov O."/>
            <person name="Brettin T."/>
            <person name="Bruce D."/>
            <person name="Han C."/>
            <person name="Tapia R."/>
            <person name="Gilna P."/>
            <person name="Schmutz J."/>
            <person name="Larimer F."/>
            <person name="Land M."/>
            <person name="Hauser L."/>
            <person name="Kyrpides N."/>
            <person name="Kim E."/>
            <person name="Newman D."/>
            <person name="Salticov C."/>
            <person name="Konstantinidis K."/>
            <person name="Klappenback J."/>
            <person name="Tiedje J."/>
            <person name="Richardson P."/>
        </authorList>
    </citation>
    <scope>NUCLEOTIDE SEQUENCE [LARGE SCALE GENOMIC DNA]</scope>
    <source>
        <strain>ANA-3</strain>
    </source>
</reference>
<reference key="2">
    <citation type="journal article" date="2012" name="J. Biol. Chem.">
        <title>N-acetylgalactosamine utilization pathway and regulon in proteobacteria: genomic reconstruction and experimental characterization in Shewanella.</title>
        <authorList>
            <person name="Leyn S.A."/>
            <person name="Gao F."/>
            <person name="Yang C."/>
            <person name="Rodionov D.A."/>
        </authorList>
    </citation>
    <scope>FUNCTION</scope>
    <scope>CATALYTIC ACTIVITY</scope>
    <scope>BIOPHYSICOCHEMICAL PROPERTIES</scope>
    <scope>SUBSTRATE SPECIFICITY</scope>
    <source>
        <strain>ANA-3</strain>
    </source>
</reference>